<feature type="chain" id="PRO_1000196463" description="Small ribosomal subunit protein bS16">
    <location>
        <begin position="1"/>
        <end position="106"/>
    </location>
</feature>
<feature type="region of interest" description="Disordered" evidence="2">
    <location>
        <begin position="84"/>
        <end position="106"/>
    </location>
</feature>
<keyword id="KW-0687">Ribonucleoprotein</keyword>
<keyword id="KW-0689">Ribosomal protein</keyword>
<sequence>MSVVIRLARAGTKKRPFYHVVVADSRFPRDGRFIERLGYFNPLMAKDNEARLKLDLDKVKDWLAKGAQPSDRVARFLDTAGVRKREARNNPEKAVPRKERKAADGK</sequence>
<organism>
    <name type="scientific">Rhodopseudomonas palustris (strain TIE-1)</name>
    <dbReference type="NCBI Taxonomy" id="395960"/>
    <lineage>
        <taxon>Bacteria</taxon>
        <taxon>Pseudomonadati</taxon>
        <taxon>Pseudomonadota</taxon>
        <taxon>Alphaproteobacteria</taxon>
        <taxon>Hyphomicrobiales</taxon>
        <taxon>Nitrobacteraceae</taxon>
        <taxon>Rhodopseudomonas</taxon>
    </lineage>
</organism>
<dbReference type="EMBL" id="CP001096">
    <property type="protein sequence ID" value="ACE98805.1"/>
    <property type="molecule type" value="Genomic_DNA"/>
</dbReference>
<dbReference type="RefSeq" id="WP_011155812.1">
    <property type="nucleotide sequence ID" value="NC_011004.1"/>
</dbReference>
<dbReference type="SMR" id="B3Q856"/>
<dbReference type="GeneID" id="66891251"/>
<dbReference type="KEGG" id="rpt:Rpal_0245"/>
<dbReference type="HOGENOM" id="CLU_100590_3_1_5"/>
<dbReference type="OrthoDB" id="9807878at2"/>
<dbReference type="Proteomes" id="UP000001725">
    <property type="component" value="Chromosome"/>
</dbReference>
<dbReference type="GO" id="GO:0005737">
    <property type="term" value="C:cytoplasm"/>
    <property type="evidence" value="ECO:0007669"/>
    <property type="project" value="UniProtKB-ARBA"/>
</dbReference>
<dbReference type="GO" id="GO:0015935">
    <property type="term" value="C:small ribosomal subunit"/>
    <property type="evidence" value="ECO:0007669"/>
    <property type="project" value="TreeGrafter"/>
</dbReference>
<dbReference type="GO" id="GO:0003735">
    <property type="term" value="F:structural constituent of ribosome"/>
    <property type="evidence" value="ECO:0007669"/>
    <property type="project" value="InterPro"/>
</dbReference>
<dbReference type="GO" id="GO:0006412">
    <property type="term" value="P:translation"/>
    <property type="evidence" value="ECO:0007669"/>
    <property type="project" value="UniProtKB-UniRule"/>
</dbReference>
<dbReference type="FunFam" id="3.30.1320.10:FF:000008">
    <property type="entry name" value="30S ribosomal protein S16"/>
    <property type="match status" value="1"/>
</dbReference>
<dbReference type="Gene3D" id="3.30.1320.10">
    <property type="match status" value="1"/>
</dbReference>
<dbReference type="HAMAP" id="MF_00385">
    <property type="entry name" value="Ribosomal_bS16"/>
    <property type="match status" value="1"/>
</dbReference>
<dbReference type="InterPro" id="IPR000307">
    <property type="entry name" value="Ribosomal_bS16"/>
</dbReference>
<dbReference type="InterPro" id="IPR023803">
    <property type="entry name" value="Ribosomal_bS16_dom_sf"/>
</dbReference>
<dbReference type="NCBIfam" id="TIGR00002">
    <property type="entry name" value="S16"/>
    <property type="match status" value="1"/>
</dbReference>
<dbReference type="PANTHER" id="PTHR12919">
    <property type="entry name" value="30S RIBOSOMAL PROTEIN S16"/>
    <property type="match status" value="1"/>
</dbReference>
<dbReference type="PANTHER" id="PTHR12919:SF20">
    <property type="entry name" value="SMALL RIBOSOMAL SUBUNIT PROTEIN BS16M"/>
    <property type="match status" value="1"/>
</dbReference>
<dbReference type="Pfam" id="PF00886">
    <property type="entry name" value="Ribosomal_S16"/>
    <property type="match status" value="1"/>
</dbReference>
<dbReference type="SUPFAM" id="SSF54565">
    <property type="entry name" value="Ribosomal protein S16"/>
    <property type="match status" value="1"/>
</dbReference>
<comment type="similarity">
    <text evidence="1">Belongs to the bacterial ribosomal protein bS16 family.</text>
</comment>
<reference key="1">
    <citation type="submission" date="2008-05" db="EMBL/GenBank/DDBJ databases">
        <title>Complete sequence of Rhodopseudomonas palustris TIE-1.</title>
        <authorList>
            <consortium name="US DOE Joint Genome Institute"/>
            <person name="Lucas S."/>
            <person name="Copeland A."/>
            <person name="Lapidus A."/>
            <person name="Glavina del Rio T."/>
            <person name="Dalin E."/>
            <person name="Tice H."/>
            <person name="Pitluck S."/>
            <person name="Chain P."/>
            <person name="Malfatti S."/>
            <person name="Shin M."/>
            <person name="Vergez L."/>
            <person name="Lang D."/>
            <person name="Schmutz J."/>
            <person name="Larimer F."/>
            <person name="Land M."/>
            <person name="Hauser L."/>
            <person name="Kyrpides N."/>
            <person name="Mikhailova N."/>
            <person name="Emerson D."/>
            <person name="Newman D.K."/>
            <person name="Roden E."/>
            <person name="Richardson P."/>
        </authorList>
    </citation>
    <scope>NUCLEOTIDE SEQUENCE [LARGE SCALE GENOMIC DNA]</scope>
    <source>
        <strain>TIE-1</strain>
    </source>
</reference>
<evidence type="ECO:0000255" key="1">
    <source>
        <dbReference type="HAMAP-Rule" id="MF_00385"/>
    </source>
</evidence>
<evidence type="ECO:0000256" key="2">
    <source>
        <dbReference type="SAM" id="MobiDB-lite"/>
    </source>
</evidence>
<evidence type="ECO:0000305" key="3"/>
<accession>B3Q856</accession>
<protein>
    <recommendedName>
        <fullName evidence="1">Small ribosomal subunit protein bS16</fullName>
    </recommendedName>
    <alternativeName>
        <fullName evidence="3">30S ribosomal protein S16</fullName>
    </alternativeName>
</protein>
<name>RS16_RHOPT</name>
<gene>
    <name evidence="1" type="primary">rpsP</name>
    <name type="ordered locus">Rpal_0245</name>
</gene>
<proteinExistence type="inferred from homology"/>